<accession>B2KDV7</accession>
<comment type="subcellular location">
    <subcellularLocation>
        <location evidence="1">Cytoplasm</location>
    </subcellularLocation>
</comment>
<comment type="similarity">
    <text evidence="1">Belongs to the TACO1 family.</text>
</comment>
<evidence type="ECO:0000255" key="1">
    <source>
        <dbReference type="HAMAP-Rule" id="MF_00693"/>
    </source>
</evidence>
<gene>
    <name type="ordered locus">Emin_1151</name>
</gene>
<name>Y1151_ELUMP</name>
<dbReference type="EMBL" id="CP001055">
    <property type="protein sequence ID" value="ACC98703.1"/>
    <property type="molecule type" value="Genomic_DNA"/>
</dbReference>
<dbReference type="RefSeq" id="WP_012415318.1">
    <property type="nucleotide sequence ID" value="NC_010644.1"/>
</dbReference>
<dbReference type="SMR" id="B2KDV7"/>
<dbReference type="STRING" id="445932.Emin_1151"/>
<dbReference type="KEGG" id="emi:Emin_1151"/>
<dbReference type="HOGENOM" id="CLU_062974_2_2_0"/>
<dbReference type="OrthoDB" id="9781053at2"/>
<dbReference type="Proteomes" id="UP000001029">
    <property type="component" value="Chromosome"/>
</dbReference>
<dbReference type="GO" id="GO:0005829">
    <property type="term" value="C:cytosol"/>
    <property type="evidence" value="ECO:0007669"/>
    <property type="project" value="TreeGrafter"/>
</dbReference>
<dbReference type="GO" id="GO:0003677">
    <property type="term" value="F:DNA binding"/>
    <property type="evidence" value="ECO:0007669"/>
    <property type="project" value="UniProtKB-UniRule"/>
</dbReference>
<dbReference type="GO" id="GO:0006355">
    <property type="term" value="P:regulation of DNA-templated transcription"/>
    <property type="evidence" value="ECO:0007669"/>
    <property type="project" value="UniProtKB-UniRule"/>
</dbReference>
<dbReference type="FunFam" id="1.10.10.200:FF:000002">
    <property type="entry name" value="Probable transcriptional regulatory protein CLM62_37755"/>
    <property type="match status" value="1"/>
</dbReference>
<dbReference type="FunFam" id="3.30.70.980:FF:000002">
    <property type="entry name" value="Probable transcriptional regulatory protein YebC"/>
    <property type="match status" value="1"/>
</dbReference>
<dbReference type="Gene3D" id="1.10.10.200">
    <property type="match status" value="1"/>
</dbReference>
<dbReference type="Gene3D" id="3.30.70.980">
    <property type="match status" value="2"/>
</dbReference>
<dbReference type="HAMAP" id="MF_00693">
    <property type="entry name" value="Transcrip_reg_TACO1"/>
    <property type="match status" value="1"/>
</dbReference>
<dbReference type="InterPro" id="IPR017856">
    <property type="entry name" value="Integrase-like_N"/>
</dbReference>
<dbReference type="InterPro" id="IPR048300">
    <property type="entry name" value="TACO1_YebC-like_2nd/3rd_dom"/>
</dbReference>
<dbReference type="InterPro" id="IPR049083">
    <property type="entry name" value="TACO1_YebC_N"/>
</dbReference>
<dbReference type="InterPro" id="IPR002876">
    <property type="entry name" value="Transcrip_reg_TACO1-like"/>
</dbReference>
<dbReference type="InterPro" id="IPR026564">
    <property type="entry name" value="Transcrip_reg_TACO1-like_dom3"/>
</dbReference>
<dbReference type="InterPro" id="IPR029072">
    <property type="entry name" value="YebC-like"/>
</dbReference>
<dbReference type="NCBIfam" id="NF001030">
    <property type="entry name" value="PRK00110.1"/>
    <property type="match status" value="1"/>
</dbReference>
<dbReference type="NCBIfam" id="NF009044">
    <property type="entry name" value="PRK12378.1"/>
    <property type="match status" value="1"/>
</dbReference>
<dbReference type="NCBIfam" id="TIGR01033">
    <property type="entry name" value="YebC/PmpR family DNA-binding transcriptional regulator"/>
    <property type="match status" value="1"/>
</dbReference>
<dbReference type="PANTHER" id="PTHR12532:SF6">
    <property type="entry name" value="TRANSCRIPTIONAL REGULATORY PROTEIN YEBC-RELATED"/>
    <property type="match status" value="1"/>
</dbReference>
<dbReference type="PANTHER" id="PTHR12532">
    <property type="entry name" value="TRANSLATIONAL ACTIVATOR OF CYTOCHROME C OXIDASE 1"/>
    <property type="match status" value="1"/>
</dbReference>
<dbReference type="Pfam" id="PF20772">
    <property type="entry name" value="TACO1_YebC_N"/>
    <property type="match status" value="1"/>
</dbReference>
<dbReference type="Pfam" id="PF01709">
    <property type="entry name" value="Transcrip_reg"/>
    <property type="match status" value="1"/>
</dbReference>
<dbReference type="SUPFAM" id="SSF75625">
    <property type="entry name" value="YebC-like"/>
    <property type="match status" value="1"/>
</dbReference>
<feature type="chain" id="PRO_1000132190" description="Probable transcriptional regulatory protein Emin_1151">
    <location>
        <begin position="1"/>
        <end position="250"/>
    </location>
</feature>
<sequence length="250" mass="27542">MGGHSHWAGIKHKKALLDSKRGKVFTRIIREITIAAKMGGAELENNPRLRKAVEDAKAANMPADNIKRAIMKGTGQLEGATYEEITYEGYGPSSIAVIVDCTTDNKNRTFSEIRKIFTSRGGSIGTTGCVSYMFKKKGLIIINKETISEESLMDIAIEAGADDIKSESEVHEVFTAPESLDIVKKALEEKGVKTESATLTMIPDTETEITDENAAQSIMKMMDELDDHDDTKAVYSNYNIPDEIMEKISK</sequence>
<protein>
    <recommendedName>
        <fullName evidence="1">Probable transcriptional regulatory protein Emin_1151</fullName>
    </recommendedName>
</protein>
<organism>
    <name type="scientific">Elusimicrobium minutum (strain Pei191)</name>
    <dbReference type="NCBI Taxonomy" id="445932"/>
    <lineage>
        <taxon>Bacteria</taxon>
        <taxon>Pseudomonadati</taxon>
        <taxon>Elusimicrobiota</taxon>
        <taxon>Elusimicrobia</taxon>
        <taxon>Elusimicrobiales</taxon>
        <taxon>Elusimicrobiaceae</taxon>
        <taxon>Elusimicrobium</taxon>
    </lineage>
</organism>
<proteinExistence type="inferred from homology"/>
<reference key="1">
    <citation type="journal article" date="2009" name="Appl. Environ. Microbiol.">
        <title>Genomic analysis of 'Elusimicrobium minutum,' the first cultivated representative of the phylum 'Elusimicrobia' (formerly termite group 1).</title>
        <authorList>
            <person name="Herlemann D.P.R."/>
            <person name="Geissinger O."/>
            <person name="Ikeda-Ohtsubo W."/>
            <person name="Kunin V."/>
            <person name="Sun H."/>
            <person name="Lapidus A."/>
            <person name="Hugenholtz P."/>
            <person name="Brune A."/>
        </authorList>
    </citation>
    <scope>NUCLEOTIDE SEQUENCE [LARGE SCALE GENOMIC DNA]</scope>
    <source>
        <strain>Pei191</strain>
    </source>
</reference>
<keyword id="KW-0963">Cytoplasm</keyword>
<keyword id="KW-0238">DNA-binding</keyword>
<keyword id="KW-1185">Reference proteome</keyword>
<keyword id="KW-0804">Transcription</keyword>
<keyword id="KW-0805">Transcription regulation</keyword>